<gene>
    <name evidence="18 20" type="primary">SQE1</name>
    <name evidence="16" type="synonym">GSE</name>
    <name evidence="21 22 23" type="synonym">SE</name>
    <name evidence="17" type="synonym">SQE</name>
</gene>
<keyword id="KW-0025">Alternative splicing</keyword>
<keyword id="KW-0256">Endoplasmic reticulum</keyword>
<keyword id="KW-0274">FAD</keyword>
<keyword id="KW-0285">Flavoprotein</keyword>
<keyword id="KW-0414">Isoprene biosynthesis</keyword>
<keyword id="KW-0472">Membrane</keyword>
<keyword id="KW-0492">Microsome</keyword>
<keyword id="KW-0560">Oxidoreductase</keyword>
<keyword id="KW-0812">Transmembrane</keyword>
<keyword id="KW-1133">Transmembrane helix</keyword>
<sequence length="539" mass="59375">MNSSSSTTTTDTLHSFMEASALLIDQYFLGWIFAFLFGFLLLLNFKRKREKNNSTEFGTDDSNGYYTPENIAGSTDVIIVGAGVAGSALAYTLANDGRRVHVIERDLTEQDRIVGELLQPGGYLKLIELGLEDCVNEIDAQRVFGYALYMDGKNTRLSYPLEKFHSDVAGRSFHNGRFVQRMREKAASLPNVRMEQGTVTSLVEKKGSVKGVQYKTKDGQELSAFAPLTIVCDGCFSNLRRSLCNPKVEVPSCFVGLILENIDLPHINHGHVILADPSPILFYKISSTEIRCLVDVPGQKVPCISNGELANYLKTVVAPQVPKQLYNSFIAAVDKGNIRTMPNRSMPADPHPTPGALLLGDAFNMRHPLTGGGMTVALSDIVLIRDLLRPLRDLHDSSTLCKYLESFYTLRKPVASTINTLAGALYKVFCASPDKARQEMRNACFDYLSLGGICSQGPIALLSGLNPRPISLFLHFFAVAIYGVGRLLIPFPSPKRMWLGARLILGASGIIFPIIKSEGLRQMFFPAIVPAYYRAPPIH</sequence>
<name>SQE1_PANGI</name>
<accession>O48651</accession>
<accession>A0A0N7APM2</accession>
<accession>Q75W20</accession>
<proteinExistence type="evidence at transcript level"/>
<evidence type="ECO:0000250" key="1">
    <source>
        <dbReference type="UniProtKB" id="P32476"/>
    </source>
</evidence>
<evidence type="ECO:0000250" key="2">
    <source>
        <dbReference type="UniProtKB" id="Q14534"/>
    </source>
</evidence>
<evidence type="ECO:0000250" key="3">
    <source>
        <dbReference type="UniProtKB" id="Q9SM02"/>
    </source>
</evidence>
<evidence type="ECO:0000255" key="4"/>
<evidence type="ECO:0000269" key="5">
    <source>
    </source>
</evidence>
<evidence type="ECO:0000269" key="6">
    <source>
    </source>
</evidence>
<evidence type="ECO:0000269" key="7">
    <source>
    </source>
</evidence>
<evidence type="ECO:0000269" key="8">
    <source>
    </source>
</evidence>
<evidence type="ECO:0000269" key="9">
    <source>
    </source>
</evidence>
<evidence type="ECO:0000269" key="10">
    <source>
    </source>
</evidence>
<evidence type="ECO:0000269" key="11">
    <source>
    </source>
</evidence>
<evidence type="ECO:0000269" key="12">
    <source>
    </source>
</evidence>
<evidence type="ECO:0000269" key="13">
    <source>
    </source>
</evidence>
<evidence type="ECO:0000269" key="14">
    <source ref="13"/>
</evidence>
<evidence type="ECO:0000269" key="15">
    <source ref="4"/>
</evidence>
<evidence type="ECO:0000303" key="16">
    <source>
    </source>
</evidence>
<evidence type="ECO:0000303" key="17">
    <source>
    </source>
</evidence>
<evidence type="ECO:0000303" key="18">
    <source>
    </source>
</evidence>
<evidence type="ECO:0000303" key="19">
    <source>
    </source>
</evidence>
<evidence type="ECO:0000303" key="20">
    <source>
    </source>
</evidence>
<evidence type="ECO:0000303" key="21">
    <source>
    </source>
</evidence>
<evidence type="ECO:0000303" key="22">
    <source ref="1"/>
</evidence>
<evidence type="ECO:0000303" key="23">
    <source ref="2"/>
</evidence>
<evidence type="ECO:0000305" key="24"/>
<organism>
    <name type="scientific">Panax ginseng</name>
    <name type="common">Korean ginseng</name>
    <dbReference type="NCBI Taxonomy" id="4054"/>
    <lineage>
        <taxon>Eukaryota</taxon>
        <taxon>Viridiplantae</taxon>
        <taxon>Streptophyta</taxon>
        <taxon>Embryophyta</taxon>
        <taxon>Tracheophyta</taxon>
        <taxon>Spermatophyta</taxon>
        <taxon>Magnoliopsida</taxon>
        <taxon>eudicotyledons</taxon>
        <taxon>Gunneridae</taxon>
        <taxon>Pentapetalae</taxon>
        <taxon>asterids</taxon>
        <taxon>campanulids</taxon>
        <taxon>Apiales</taxon>
        <taxon>Araliaceae</taxon>
        <taxon>Panax</taxon>
    </lineage>
</organism>
<feature type="chain" id="PRO_0000209846" description="Squalene monooxygenase SE1">
    <location>
        <begin position="1"/>
        <end position="539"/>
    </location>
</feature>
<feature type="transmembrane region" description="Helical" evidence="4">
    <location>
        <begin position="22"/>
        <end position="42"/>
    </location>
</feature>
<feature type="transmembrane region" description="Helical" evidence="4">
    <location>
        <begin position="71"/>
        <end position="91"/>
    </location>
</feature>
<feature type="transmembrane region" description="Helical" evidence="4">
    <location>
        <begin position="472"/>
        <end position="492"/>
    </location>
</feature>
<feature type="binding site" evidence="2">
    <location>
        <begin position="84"/>
        <end position="85"/>
    </location>
    <ligand>
        <name>FAD</name>
        <dbReference type="ChEBI" id="CHEBI:57692"/>
    </ligand>
</feature>
<feature type="binding site" evidence="2">
    <location>
        <begin position="104"/>
        <end position="105"/>
    </location>
    <ligand>
        <name>FAD</name>
        <dbReference type="ChEBI" id="CHEBI:57692"/>
    </ligand>
</feature>
<feature type="binding site" evidence="2">
    <location>
        <position position="112"/>
    </location>
    <ligand>
        <name>FAD</name>
        <dbReference type="ChEBI" id="CHEBI:57692"/>
    </ligand>
</feature>
<feature type="binding site" evidence="2">
    <location>
        <position position="183"/>
    </location>
    <ligand>
        <name>FAD</name>
        <dbReference type="ChEBI" id="CHEBI:57692"/>
    </ligand>
</feature>
<feature type="binding site" evidence="2">
    <location>
        <position position="199"/>
    </location>
    <ligand>
        <name>FAD</name>
        <dbReference type="ChEBI" id="CHEBI:57692"/>
    </ligand>
</feature>
<feature type="binding site" evidence="2">
    <location>
        <position position="361"/>
    </location>
    <ligand>
        <name>FAD</name>
        <dbReference type="ChEBI" id="CHEBI:57692"/>
    </ligand>
</feature>
<feature type="binding site" evidence="2">
    <location>
        <position position="374"/>
    </location>
    <ligand>
        <name>FAD</name>
        <dbReference type="ChEBI" id="CHEBI:57692"/>
    </ligand>
</feature>
<feature type="site" description="Important for enzyme activity" evidence="2">
    <location>
        <position position="146"/>
    </location>
</feature>
<feature type="splice variant" id="VSP_060119" description="In isoform 2.">
    <original>MNSSSSTT</original>
    <variation>MNSSSSS</variation>
    <location>
        <begin position="1"/>
        <end position="8"/>
    </location>
</feature>
<feature type="sequence conflict" description="In Ref. 2; BAD15330 and 3; AJV26446." evidence="24" ref="2 3">
    <location>
        <begin position="19"/>
        <end position="20"/>
    </location>
</feature>
<feature type="sequence conflict" description="In Ref. 3; AJV26446." evidence="24" ref="3">
    <original>S</original>
    <variation>P</variation>
    <location>
        <position position="87"/>
    </location>
</feature>
<feature type="sequence conflict" description="In Ref. 2; BAD15330 and 3; AJV26446." evidence="24" ref="2 3">
    <original>N</original>
    <variation>K</variation>
    <location>
        <position position="95"/>
    </location>
</feature>
<feature type="sequence conflict" description="In Ref. 3; AJV26446." evidence="24" ref="3">
    <original>C</original>
    <variation>R</variation>
    <location>
        <position position="134"/>
    </location>
</feature>
<feature type="sequence conflict" description="In Ref. 2; BAD15330 and 3; AJV26446." evidence="24" ref="2 3">
    <original>G</original>
    <variation>A</variation>
    <location>
        <position position="207"/>
    </location>
</feature>
<feature type="sequence conflict" description="In Ref. 2; BAD15330 and 3; AJV26446." evidence="24" ref="2 3">
    <original>I</original>
    <variation>V</variation>
    <location>
        <position position="267"/>
    </location>
</feature>
<feature type="sequence conflict" description="In Ref. 3; AJV26446." evidence="24" ref="3">
    <original>T</original>
    <variation>A</variation>
    <location>
        <position position="288"/>
    </location>
</feature>
<feature type="sequence conflict" description="In Ref. 2; BAD15330 and 3; AJV26446." evidence="24" ref="2 3">
    <original>I</original>
    <variation>T</variation>
    <location>
        <position position="528"/>
    </location>
</feature>
<comment type="function">
    <text evidence="3 9 12 19">Component of the triterpene saponins (e.g. ginsenosides or panaxosides) and phytosterols biosynthetic pathways (PubMed:19857882, PubMed:27746309, PubMed:29378087). Catalyzes the first oxygenation step in sterol biosynthesis and is suggested to be one of the rate-limiting enzymes in this pathway (By similarity).</text>
</comment>
<comment type="catalytic activity">
    <reaction evidence="3">
        <text>squalene + reduced [NADPH--hemoprotein reductase] + O2 = (S)-2,3-epoxysqualene + oxidized [NADPH--hemoprotein reductase] + H2O + H(+)</text>
        <dbReference type="Rhea" id="RHEA:25282"/>
        <dbReference type="Rhea" id="RHEA-COMP:11964"/>
        <dbReference type="Rhea" id="RHEA-COMP:11965"/>
        <dbReference type="ChEBI" id="CHEBI:15377"/>
        <dbReference type="ChEBI" id="CHEBI:15378"/>
        <dbReference type="ChEBI" id="CHEBI:15379"/>
        <dbReference type="ChEBI" id="CHEBI:15440"/>
        <dbReference type="ChEBI" id="CHEBI:15441"/>
        <dbReference type="ChEBI" id="CHEBI:57618"/>
        <dbReference type="ChEBI" id="CHEBI:58210"/>
        <dbReference type="EC" id="1.14.14.17"/>
    </reaction>
    <physiologicalReaction direction="left-to-right" evidence="20">
        <dbReference type="Rhea" id="RHEA:25283"/>
    </physiologicalReaction>
</comment>
<comment type="cofactor">
    <cofactor evidence="2">
        <name>FAD</name>
        <dbReference type="ChEBI" id="CHEBI:57692"/>
    </cofactor>
</comment>
<comment type="pathway">
    <text>Terpene metabolism; lanosterol biosynthesis; lanosterol from farnesyl diphosphate: step 2/3.</text>
</comment>
<comment type="subcellular location">
    <subcellularLocation>
        <location evidence="1">Microsome membrane</location>
        <topology evidence="1">Multi-pass membrane protein</topology>
    </subcellularLocation>
    <subcellularLocation>
        <location evidence="1">Endoplasmic reticulum membrane</location>
        <topology evidence="1">Multi-pass membrane protein</topology>
    </subcellularLocation>
</comment>
<comment type="alternative products">
    <event type="alternative splicing"/>
    <isoform>
        <id>O48651-1</id>
        <name>1</name>
        <sequence type="displayed"/>
    </isoform>
    <isoform>
        <id>O48651-2</id>
        <name>2</name>
        <sequence type="described" ref="VSP_060119"/>
    </isoform>
</comment>
<comment type="tissue specificity">
    <text evidence="9 13">Mostly expressed in flower buds and leaves, and, to a lower extent, at high levels thought, in roots and petioles (PubMed:19857882, PubMed:30577538). In petioles, preferentially observed in vascular bundle tissue (phloem cells and parenchymatous cells near xylem) and resin ducts (PubMed:19857882).</text>
</comment>
<comment type="developmental stage">
    <text evidence="13">Rapid decrease in roots and leaves from the leaf opened to the green fruit stage (PubMed:30577538). At the leaf opened stage, accumulates mostly in leaves (PubMed:30577538).</text>
</comment>
<comment type="induction">
    <text evidence="5 6 7 8 9 10 11 12 13 14 15">Induced by jasmonic acid (JA) and methyl jasmonate (MeJA) in adventitious roots (PubMed:15356323, PubMed:15538577, PubMed:19857882, Ref.4). Induced by chitosan (CHN) (PubMed:15493471). Accumulates upon Cle-mediated signaling, an elicitor derived from fungal cell walls of C.lagenarium, thus inducing the accumulation of saponins (PubMed:15821288). Triggered by ethylene (ACC), rose bengal (RB), nitric oxide (NO) (PubMed:15821288). Accumulates in response to hydrogen peroxide (H(2)O(2)) (PubMed:15821288, Ref.4). Accumulates in the presence of squalene (PubMed:19857882). Induced by N,N'-dicyclohexylcarbodiimide (DCCD) in a nitric oxide (NO) dependent manner thus leading to increased ginsenosides accumulation (PubMed:23467002). Induced by A.niger mycelium-derived elicitor, thus improving ginsenosides production in adventitious roots culture (PubMed:27746309). Triggered by vanadate (Ref.13). Stimulated by the plant cell wall-derived elicitor oligogalacturonic acid (Ref.4). Accumulates under heavy metal stress in the presence of CdCl(2) (PubMed:23232757). Influenced in roots by temperature and photosynthetically active radiation (PAR), and in leaves by relative humidity and rain (PubMed:30577538).</text>
</comment>
<comment type="disruption phenotype">
    <text evidence="9">Reduced ginsenoside production. Strong up-regulation of squalene epoxidase 2 (SQE2) and cycloartenol synthase (OSCPNX1) expression resulting in an enhanced accumulation of phytosterol (campesterol, stigmasterol and sitosterol).</text>
</comment>
<comment type="similarity">
    <text evidence="24">Belongs to the squalene monooxygenase family.</text>
</comment>
<dbReference type="EC" id="1.14.14.17" evidence="3"/>
<dbReference type="EMBL" id="AB003516">
    <property type="protein sequence ID" value="BAA24448.1"/>
    <property type="molecule type" value="mRNA"/>
</dbReference>
<dbReference type="EMBL" id="AB122078">
    <property type="protein sequence ID" value="BAD15330.1"/>
    <property type="molecule type" value="mRNA"/>
</dbReference>
<dbReference type="EMBL" id="KJ939265">
    <property type="protein sequence ID" value="AJV26446.1"/>
    <property type="molecule type" value="mRNA"/>
</dbReference>
<dbReference type="SMR" id="O48651"/>
<dbReference type="BRENDA" id="1.14.99.7">
    <property type="organism ID" value="7895"/>
</dbReference>
<dbReference type="UniPathway" id="UPA00767">
    <property type="reaction ID" value="UER00752"/>
</dbReference>
<dbReference type="GO" id="GO:0005789">
    <property type="term" value="C:endoplasmic reticulum membrane"/>
    <property type="evidence" value="ECO:0007669"/>
    <property type="project" value="UniProtKB-SubCell"/>
</dbReference>
<dbReference type="GO" id="GO:0050660">
    <property type="term" value="F:flavin adenine dinucleotide binding"/>
    <property type="evidence" value="ECO:0007669"/>
    <property type="project" value="InterPro"/>
</dbReference>
<dbReference type="GO" id="GO:0004506">
    <property type="term" value="F:squalene monooxygenase activity"/>
    <property type="evidence" value="ECO:0007669"/>
    <property type="project" value="UniProtKB-EC"/>
</dbReference>
<dbReference type="GO" id="GO:0009723">
    <property type="term" value="P:response to ethylene"/>
    <property type="evidence" value="ECO:0000270"/>
    <property type="project" value="UniProtKB"/>
</dbReference>
<dbReference type="GO" id="GO:0042542">
    <property type="term" value="P:response to hydrogen peroxide"/>
    <property type="evidence" value="ECO:0000270"/>
    <property type="project" value="UniProtKB"/>
</dbReference>
<dbReference type="GO" id="GO:0009753">
    <property type="term" value="P:response to jasmonic acid"/>
    <property type="evidence" value="ECO:0000270"/>
    <property type="project" value="UniProtKB"/>
</dbReference>
<dbReference type="GO" id="GO:0010038">
    <property type="term" value="P:response to metal ion"/>
    <property type="evidence" value="ECO:0000270"/>
    <property type="project" value="UniProtKB"/>
</dbReference>
<dbReference type="GO" id="GO:0002238">
    <property type="term" value="P:response to molecule of fungal origin"/>
    <property type="evidence" value="ECO:0000270"/>
    <property type="project" value="UniProtKB"/>
</dbReference>
<dbReference type="GO" id="GO:0071731">
    <property type="term" value="P:response to nitric oxide"/>
    <property type="evidence" value="ECO:0000270"/>
    <property type="project" value="UniProtKB"/>
</dbReference>
<dbReference type="GO" id="GO:0009751">
    <property type="term" value="P:response to salicylic acid"/>
    <property type="evidence" value="ECO:0000270"/>
    <property type="project" value="UniProtKB"/>
</dbReference>
<dbReference type="GO" id="GO:1902438">
    <property type="term" value="P:response to vanadate(3-)"/>
    <property type="evidence" value="ECO:0000270"/>
    <property type="project" value="UniProtKB"/>
</dbReference>
<dbReference type="GO" id="GO:0016126">
    <property type="term" value="P:sterol biosynthetic process"/>
    <property type="evidence" value="ECO:0000315"/>
    <property type="project" value="UniProtKB"/>
</dbReference>
<dbReference type="GO" id="GO:0046246">
    <property type="term" value="P:terpene biosynthetic process"/>
    <property type="evidence" value="ECO:0000315"/>
    <property type="project" value="UniProtKB"/>
</dbReference>
<dbReference type="FunFam" id="3.50.50.60:FF:000074">
    <property type="entry name" value="Squalene monooxygenase 2"/>
    <property type="match status" value="1"/>
</dbReference>
<dbReference type="Gene3D" id="3.50.50.60">
    <property type="entry name" value="FAD/NAD(P)-binding domain"/>
    <property type="match status" value="1"/>
</dbReference>
<dbReference type="InterPro" id="IPR006076">
    <property type="entry name" value="FAD-dep_OxRdtase"/>
</dbReference>
<dbReference type="InterPro" id="IPR036188">
    <property type="entry name" value="FAD/NAD-bd_sf"/>
</dbReference>
<dbReference type="InterPro" id="IPR013698">
    <property type="entry name" value="Squalene_epoxidase"/>
</dbReference>
<dbReference type="InterPro" id="IPR040125">
    <property type="entry name" value="Squalene_monox"/>
</dbReference>
<dbReference type="PANTHER" id="PTHR10835">
    <property type="entry name" value="SQUALENE MONOOXYGENASE"/>
    <property type="match status" value="1"/>
</dbReference>
<dbReference type="PANTHER" id="PTHR10835:SF0">
    <property type="entry name" value="SQUALENE MONOOXYGENASE"/>
    <property type="match status" value="1"/>
</dbReference>
<dbReference type="Pfam" id="PF01266">
    <property type="entry name" value="DAO"/>
    <property type="match status" value="1"/>
</dbReference>
<dbReference type="Pfam" id="PF08491">
    <property type="entry name" value="SE"/>
    <property type="match status" value="1"/>
</dbReference>
<dbReference type="PRINTS" id="PR00420">
    <property type="entry name" value="RNGMNOXGNASE"/>
</dbReference>
<dbReference type="SUPFAM" id="SSF51905">
    <property type="entry name" value="FAD/NAD(P)-binding domain"/>
    <property type="match status" value="1"/>
</dbReference>
<protein>
    <recommendedName>
        <fullName evidence="22">Squalene monooxygenase SE1</fullName>
        <ecNumber evidence="3">1.14.14.17</ecNumber>
    </recommendedName>
    <alternativeName>
        <fullName evidence="18 20 22 23">Squalene epoxidase 1</fullName>
        <shortName evidence="18 20">PgSQE1</shortName>
        <shortName evidence="22 23">SE</shortName>
        <shortName evidence="18">SE1</shortName>
        <shortName evidence="16">gse</shortName>
    </alternativeName>
</protein>
<reference key="1">
    <citation type="submission" date="1997-05" db="EMBL/GenBank/DDBJ databases">
        <title>Isolation and characterization of a cDNA encoding the squalene epoxidase from Panax ginseng.</title>
        <authorList>
            <person name="Suzuki H."/>
        </authorList>
    </citation>
    <scope>NUCLEOTIDE SEQUENCE [MRNA] (ISOFORM 1)</scope>
</reference>
<reference key="2">
    <citation type="submission" date="2003-10" db="EMBL/GenBank/DDBJ databases">
        <title>Isolation and characterization of squalene epoxidase in Panax ginseng.</title>
        <authorList>
            <person name="In J.-G."/>
            <person name="Yang D.C."/>
            <person name="Lee B.S."/>
        </authorList>
    </citation>
    <scope>NUCLEOTIDE SEQUENCE [MRNA] (ISOFORM 2)</scope>
    <source>
        <tissue>Leaf</tissue>
    </source>
</reference>
<reference key="3">
    <citation type="submission" date="2014-06" db="EMBL/GenBank/DDBJ databases">
        <title>Cloning and expression analysis of HMGR, SS, SE, DS, and bAS genes in Panax ginseng.</title>
        <authorList>
            <person name="Hou S."/>
            <person name="Han M."/>
            <person name="Liu C."/>
            <person name="Yang L."/>
        </authorList>
    </citation>
    <scope>NUCLEOTIDE SEQUENCE [MRNA] (ISOFORM 2)</scope>
</reference>
<reference key="4">
    <citation type="journal article" date="2003" name="Physiol. Plantarum">
        <title>Hydrogen peroxide and jasmonic acid mediate oligogalacturonic acid-induced saponin accumulation in suspension-cultured cells of Panax ginseng.</title>
        <authorList>
            <person name="Hu X."/>
            <person name="Neill S."/>
            <person name="Cai W."/>
            <person name="Tang Z."/>
        </authorList>
    </citation>
    <scope>INDUCTION BY OLIGOGALACTURONIC ACID; HYDROGEN PEROXIDE AND JASMONIC ACID</scope>
</reference>
<reference key="5">
    <citation type="journal article" date="2004" name="Plant Cell Physiol.">
        <title>Enhanced triterpene and phytosterol biosynthesis in Panax ginseng overexpressing squalene synthase gene.</title>
        <authorList>
            <person name="Lee M.-H."/>
            <person name="Jeong J.-H."/>
            <person name="Seo J.-W."/>
            <person name="Shin C.-G."/>
            <person name="Kim Y.-S."/>
            <person name="In J.-G."/>
            <person name="Yang D.-C."/>
            <person name="Yi J.-S."/>
            <person name="Choi Y.-E."/>
        </authorList>
    </citation>
    <scope>INDUCTION BY METHYL JASMONATE</scope>
    <source>
        <strain>cv. Chunpoong</strain>
        <tissue>Leaf</tissue>
    </source>
</reference>
<reference key="6">
    <citation type="journal article" date="2004" name="Sci. China, Ser. C, Life Sci.">
        <title>Mitogen-activated protein kinases mediate the oxidative burst and saponin synthesis induced by chitosan in cell cultures of Panax ginseng.</title>
        <authorList>
            <person name="Hu X."/>
            <person name="Neill S.J."/>
            <person name="Fang J."/>
            <person name="Cai W."/>
            <person name="Tang Z."/>
        </authorList>
    </citation>
    <scope>INDUCTION BY CHITOSAN</scope>
</reference>
<reference key="7">
    <citation type="journal article" date="2005" name="Plant Cell Physiol.">
        <title>Fungal elicitor induces singlet oxygen generation, ethylene release and saponin synthesis in cultured cells of Panax ginseng C. A. Meyer.</title>
        <authorList>
            <person name="Xu X."/>
            <person name="Hu X."/>
            <person name="Neill S.J."/>
            <person name="Fang J."/>
            <person name="Cai W."/>
        </authorList>
    </citation>
    <scope>INDUCTION BY CLE; ETHYLENE; ROSE BENGAL; NITRIC OXIDE AND HYDROGEN PEROXIDE</scope>
</reference>
<reference key="8">
    <citation type="journal article" date="2005" name="Plant Cell Rep.">
        <title>Analysis of transcripts in methyl jasmonate-treated ginseng hairy roots to identify genes involved in the biosynthesis of ginsenosides and other secondary metabolites.</title>
        <authorList>
            <person name="Choi D.-W."/>
            <person name="Jung J."/>
            <person name="Ha Y.I."/>
            <person name="Park H.-W."/>
            <person name="In D.S."/>
            <person name="Chung H.-J."/>
            <person name="Liu J.R."/>
        </authorList>
    </citation>
    <scope>INDUCTION BY METHYL JASMONATE</scope>
</reference>
<reference key="9">
    <citation type="journal article" date="2010" name="Phytochemistry">
        <title>Regulation of ginsenoside and phytosterol biosynthesis by RNA interferences of squalene epoxidase gene in Panax ginseng.</title>
        <authorList>
            <person name="Han J.-Y."/>
            <person name="In J.-G."/>
            <person name="Kwon Y.-S."/>
            <person name="Choi Y.-E."/>
        </authorList>
    </citation>
    <scope>FUNCTION</scope>
    <scope>DISRUPTION PHENOTYPE</scope>
    <scope>TISSUE SPECIFICITY</scope>
    <scope>INDUCTION BY METHYL JASMONATE AND SQUALENE</scope>
</reference>
<reference key="10">
    <citation type="journal article" date="2013" name="Bull. Environ. Contam. Toxicol.">
        <title>Transcript pattern of cytochrome P450, antioxidant and ginsenoside biosynthetic pathway genes under heavy metal stress in Panax ginseng Meyer.</title>
        <authorList>
            <person name="Balusamy S.R.D."/>
            <person name="Kim Y.-J."/>
            <person name="Rahimi S."/>
            <person name="Senthil K.S."/>
            <person name="Lee O.R."/>
            <person name="Lee S."/>
            <person name="Yang D.-C."/>
        </authorList>
    </citation>
    <scope>INDUCED BY HEAVY METAL STRESS</scope>
</reference>
<reference key="11">
    <citation type="journal article" date="2013" name="J. Biotechnol.">
        <title>Enhancement of ginsenoside biosynthesis in cell cultures of Panax ginseng by N,N'-dicyclohexylcarbodiimide elicitation.</title>
        <authorList>
            <person name="Huang C."/>
            <person name="Qian Z.-G."/>
            <person name="Zhong J.-J."/>
        </authorList>
    </citation>
    <scope>INDUCTION BY DCCD</scope>
</reference>
<reference key="12">
    <citation type="journal article" date="2013" name="J. Ginseng Res.">
        <title>The improvement of ginsenoside accumulation in Panax ginseng as a result of gamma-irradiation.</title>
        <authorList>
            <person name="Kim D.S."/>
            <person name="Song M."/>
            <person name="Kim S.-H."/>
            <person name="Jang D.-S."/>
            <person name="Kim J.-B."/>
            <person name="Ha B.-K."/>
            <person name="Kim S.H."/>
            <person name="Lee K.J."/>
            <person name="Kang S.-Y."/>
            <person name="Jeong I.Y."/>
        </authorList>
    </citation>
    <scope>GENE FAMILY</scope>
</reference>
<reference key="13">
    <citation type="journal article" date="2013" name="Process Biochem.">
        <title>Elicitation of ginsenoside biosynthesis in cell cultures of Panax ginseng by vanadate.</title>
        <authorList>
            <person name="Huang C."/>
            <person name="Zhong J.-J."/>
        </authorList>
    </citation>
    <scope>INDUCTION BY VANADATE</scope>
</reference>
<reference key="14">
    <citation type="journal article" date="2016" name="J. Biotechnol.">
        <title>Fungal elicitors enhance ginsenosides biosynthesis, expression of functional genes as well as signal molecules accumulation in adventitious roots of Panax ginseng C. A. Mey.</title>
        <authorList>
            <person name="Li J."/>
            <person name="Liu S."/>
            <person name="Wang J."/>
            <person name="Li J."/>
            <person name="Liu D."/>
            <person name="Li J."/>
            <person name="Gao W."/>
        </authorList>
    </citation>
    <scope>FUNCTION</scope>
    <scope>INDUCTION BY ASPERGILLUS NIGER</scope>
</reference>
<reference key="15">
    <citation type="journal article" date="2018" name="Biotechnol. Appl. Biochem.">
        <title>Advances in ginsenoside biosynthesis and metabolic regulation.</title>
        <authorList>
            <person name="Lu J."/>
            <person name="Li J."/>
            <person name="Wang S."/>
            <person name="Yao L."/>
            <person name="Liang W."/>
            <person name="Wang J."/>
            <person name="Gao W."/>
        </authorList>
    </citation>
    <scope>REVIEW</scope>
</reference>
<reference key="16">
    <citation type="journal article" date="2018" name="Molecules">
        <title>Progress on the studies of the key enzymes of ginsenoside biosynthesis.</title>
        <authorList>
            <person name="Yang J.-L."/>
            <person name="Hu Z.-F."/>
            <person name="Zhang T.-T."/>
            <person name="Gu A.-D."/>
            <person name="Gong T."/>
            <person name="Zhu P."/>
        </authorList>
    </citation>
    <scope>REVIEW</scope>
    <scope>NOMENCLATURE</scope>
</reference>
<reference key="17">
    <citation type="journal article" date="2018" name="Molecules">
        <title>The effects of environmental factors on ginsenoside biosynthetic enzyme gene expression and saponin abundance.</title>
        <authorList>
            <person name="Zhang T."/>
            <person name="Han M."/>
            <person name="Yang L."/>
            <person name="Han Z."/>
            <person name="Cheng L."/>
            <person name="Sun Z."/>
            <person name="Yang L."/>
        </authorList>
    </citation>
    <scope>DEVELOPMENTAL STAGE</scope>
    <scope>TISSUE SPECIFICITY</scope>
    <scope>INDUCTION BY ABIOTIC FACTORS</scope>
</reference>